<organism>
    <name type="scientific">Actinobacillus pleuropneumoniae serotype 7 (strain AP76)</name>
    <dbReference type="NCBI Taxonomy" id="537457"/>
    <lineage>
        <taxon>Bacteria</taxon>
        <taxon>Pseudomonadati</taxon>
        <taxon>Pseudomonadota</taxon>
        <taxon>Gammaproteobacteria</taxon>
        <taxon>Pasteurellales</taxon>
        <taxon>Pasteurellaceae</taxon>
        <taxon>Actinobacillus</taxon>
    </lineage>
</organism>
<sequence length="306" mass="34349">MIKQRTLKQATKVTGIGLHSGKKVTLTLRPAPANTGIVYARTDLEPAVYFPASAESIRDTQLCTCMINDDGVRISTVEHLNAAMASLGLDNLIVEVDAPEIPIMDGSASPFIYLLLDAGIEEQDAPKKFIRIRETVRVEEGDKWAEMKPYSKGLKLDFTIDFSHPMISKDVRNFKMELSAENFIHKISRARTFTFMKDVEYLQSIGLALGGSLDNAIVLDKYRILNEEGLRYKDELVKHKMLDSIGDLFMCGYNILGDFSAYKSGHGLNNKLLRAILANENAWEFVTFEDKEQAPEGYRIGEQVFI</sequence>
<evidence type="ECO:0000255" key="1">
    <source>
        <dbReference type="HAMAP-Rule" id="MF_00388"/>
    </source>
</evidence>
<protein>
    <recommendedName>
        <fullName evidence="1">UDP-3-O-acyl-N-acetylglucosamine deacetylase</fullName>
        <shortName evidence="1">UDP-3-O-acyl-GlcNAc deacetylase</shortName>
        <ecNumber evidence="1">3.5.1.108</ecNumber>
    </recommendedName>
    <alternativeName>
        <fullName evidence="1">UDP-3-O-[R-3-hydroxymyristoyl]-N-acetylglucosamine deacetylase</fullName>
    </alternativeName>
</protein>
<dbReference type="EC" id="3.5.1.108" evidence="1"/>
<dbReference type="EMBL" id="CP001091">
    <property type="protein sequence ID" value="ACE60676.1"/>
    <property type="molecule type" value="Genomic_DNA"/>
</dbReference>
<dbReference type="RefSeq" id="WP_005603044.1">
    <property type="nucleotide sequence ID" value="NC_010939.1"/>
</dbReference>
<dbReference type="SMR" id="B3GZL4"/>
<dbReference type="KEGG" id="apa:APP7_0024"/>
<dbReference type="HOGENOM" id="CLU_046528_1_0_6"/>
<dbReference type="UniPathway" id="UPA00359">
    <property type="reaction ID" value="UER00478"/>
</dbReference>
<dbReference type="Proteomes" id="UP000001226">
    <property type="component" value="Chromosome"/>
</dbReference>
<dbReference type="GO" id="GO:0016020">
    <property type="term" value="C:membrane"/>
    <property type="evidence" value="ECO:0007669"/>
    <property type="project" value="GOC"/>
</dbReference>
<dbReference type="GO" id="GO:0046872">
    <property type="term" value="F:metal ion binding"/>
    <property type="evidence" value="ECO:0007669"/>
    <property type="project" value="UniProtKB-KW"/>
</dbReference>
<dbReference type="GO" id="GO:0103117">
    <property type="term" value="F:UDP-3-O-acyl-N-acetylglucosamine deacetylase activity"/>
    <property type="evidence" value="ECO:0007669"/>
    <property type="project" value="UniProtKB-UniRule"/>
</dbReference>
<dbReference type="GO" id="GO:0009245">
    <property type="term" value="P:lipid A biosynthetic process"/>
    <property type="evidence" value="ECO:0007669"/>
    <property type="project" value="UniProtKB-UniRule"/>
</dbReference>
<dbReference type="Gene3D" id="3.30.230.20">
    <property type="entry name" value="lpxc deacetylase, domain 1"/>
    <property type="match status" value="1"/>
</dbReference>
<dbReference type="Gene3D" id="3.30.1700.10">
    <property type="entry name" value="lpxc deacetylase, domain 2"/>
    <property type="match status" value="1"/>
</dbReference>
<dbReference type="HAMAP" id="MF_00388">
    <property type="entry name" value="LpxC"/>
    <property type="match status" value="1"/>
</dbReference>
<dbReference type="InterPro" id="IPR020568">
    <property type="entry name" value="Ribosomal_Su5_D2-typ_SF"/>
</dbReference>
<dbReference type="InterPro" id="IPR004463">
    <property type="entry name" value="UDP-acyl_GlcNac_deAcase"/>
</dbReference>
<dbReference type="InterPro" id="IPR011334">
    <property type="entry name" value="UDP-acyl_GlcNac_deAcase_C"/>
</dbReference>
<dbReference type="InterPro" id="IPR015870">
    <property type="entry name" value="UDP-acyl_N-AcGlcN_deAcase_N"/>
</dbReference>
<dbReference type="NCBIfam" id="TIGR00325">
    <property type="entry name" value="lpxC"/>
    <property type="match status" value="1"/>
</dbReference>
<dbReference type="PANTHER" id="PTHR33694">
    <property type="entry name" value="UDP-3-O-ACYL-N-ACETYLGLUCOSAMINE DEACETYLASE 1, MITOCHONDRIAL-RELATED"/>
    <property type="match status" value="1"/>
</dbReference>
<dbReference type="PANTHER" id="PTHR33694:SF1">
    <property type="entry name" value="UDP-3-O-ACYL-N-ACETYLGLUCOSAMINE DEACETYLASE 1, MITOCHONDRIAL-RELATED"/>
    <property type="match status" value="1"/>
</dbReference>
<dbReference type="Pfam" id="PF03331">
    <property type="entry name" value="LpxC"/>
    <property type="match status" value="1"/>
</dbReference>
<dbReference type="SUPFAM" id="SSF54211">
    <property type="entry name" value="Ribosomal protein S5 domain 2-like"/>
    <property type="match status" value="2"/>
</dbReference>
<proteinExistence type="inferred from homology"/>
<gene>
    <name evidence="1" type="primary">lpxC</name>
    <name type="ordered locus">APP7_0024</name>
</gene>
<keyword id="KW-0378">Hydrolase</keyword>
<keyword id="KW-0441">Lipid A biosynthesis</keyword>
<keyword id="KW-0444">Lipid biosynthesis</keyword>
<keyword id="KW-0443">Lipid metabolism</keyword>
<keyword id="KW-0479">Metal-binding</keyword>
<keyword id="KW-0862">Zinc</keyword>
<reference key="1">
    <citation type="submission" date="2008-06" db="EMBL/GenBank/DDBJ databases">
        <title>Genome and proteome analysis of A. pleuropneumoniae serotype 7.</title>
        <authorList>
            <person name="Linke B."/>
            <person name="Buettner F."/>
            <person name="Martinez-Arias R."/>
            <person name="Goesmann A."/>
            <person name="Baltes N."/>
            <person name="Tegetmeyer H."/>
            <person name="Singh M."/>
            <person name="Gerlach G.F."/>
        </authorList>
    </citation>
    <scope>NUCLEOTIDE SEQUENCE [LARGE SCALE GENOMIC DNA]</scope>
    <source>
        <strain>AP76</strain>
    </source>
</reference>
<name>LPXC_ACTP7</name>
<feature type="chain" id="PRO_1000190883" description="UDP-3-O-acyl-N-acetylglucosamine deacetylase">
    <location>
        <begin position="1"/>
        <end position="306"/>
    </location>
</feature>
<feature type="active site" description="Proton donor" evidence="1">
    <location>
        <position position="266"/>
    </location>
</feature>
<feature type="binding site" evidence="1">
    <location>
        <position position="79"/>
    </location>
    <ligand>
        <name>Zn(2+)</name>
        <dbReference type="ChEBI" id="CHEBI:29105"/>
    </ligand>
</feature>
<feature type="binding site" evidence="1">
    <location>
        <position position="239"/>
    </location>
    <ligand>
        <name>Zn(2+)</name>
        <dbReference type="ChEBI" id="CHEBI:29105"/>
    </ligand>
</feature>
<feature type="binding site" evidence="1">
    <location>
        <position position="243"/>
    </location>
    <ligand>
        <name>Zn(2+)</name>
        <dbReference type="ChEBI" id="CHEBI:29105"/>
    </ligand>
</feature>
<accession>B3GZL4</accession>
<comment type="function">
    <text evidence="1">Catalyzes the hydrolysis of UDP-3-O-myristoyl-N-acetylglucosamine to form UDP-3-O-myristoylglucosamine and acetate, the committed step in lipid A biosynthesis.</text>
</comment>
<comment type="catalytic activity">
    <reaction evidence="1">
        <text>a UDP-3-O-[(3R)-3-hydroxyacyl]-N-acetyl-alpha-D-glucosamine + H2O = a UDP-3-O-[(3R)-3-hydroxyacyl]-alpha-D-glucosamine + acetate</text>
        <dbReference type="Rhea" id="RHEA:67816"/>
        <dbReference type="ChEBI" id="CHEBI:15377"/>
        <dbReference type="ChEBI" id="CHEBI:30089"/>
        <dbReference type="ChEBI" id="CHEBI:137740"/>
        <dbReference type="ChEBI" id="CHEBI:173225"/>
        <dbReference type="EC" id="3.5.1.108"/>
    </reaction>
</comment>
<comment type="cofactor">
    <cofactor evidence="1">
        <name>Zn(2+)</name>
        <dbReference type="ChEBI" id="CHEBI:29105"/>
    </cofactor>
</comment>
<comment type="pathway">
    <text evidence="1">Glycolipid biosynthesis; lipid IV(A) biosynthesis; lipid IV(A) from (3R)-3-hydroxytetradecanoyl-[acyl-carrier-protein] and UDP-N-acetyl-alpha-D-glucosamine: step 2/6.</text>
</comment>
<comment type="similarity">
    <text evidence="1">Belongs to the LpxC family.</text>
</comment>